<sequence length="296" mass="31684">MAWLGSLDLHYRPDPDAPAAALPRTIGRGVHSGPLRVLQSLYPEGPGICHHVLVHPPGGIVGGDELALTAQVDTGAHALLTTPGATRFYRSGGDAALQTLTARVADGARLEWLPLETLVHDGARARNALRFELAPGAEMLGWDLLALGLPAAGERYASGCFEQSIEVRSAAHPLPWLERGVLDFDDPRHAPVTQRLLASPLGWAGHTVLATLWFASGTALASARRDALIDAARAPDSAAQPGAEPLGVTAPHDHVVVLRMLGARVEPLMQRLRAVRGRWRRLAWDCAGAEPRVWRT</sequence>
<reference key="1">
    <citation type="journal article" date="2007" name="J. Bacteriol.">
        <title>Whole-genome analysis of the methyl tert-butyl ether-degrading beta-proteobacterium Methylibium petroleiphilum PM1.</title>
        <authorList>
            <person name="Kane S.R."/>
            <person name="Chakicherla A.Y."/>
            <person name="Chain P.S.G."/>
            <person name="Schmidt R."/>
            <person name="Shin M.W."/>
            <person name="Legler T.C."/>
            <person name="Scow K.M."/>
            <person name="Larimer F.W."/>
            <person name="Lucas S.M."/>
            <person name="Richardson P.M."/>
            <person name="Hristova K.R."/>
        </authorList>
    </citation>
    <scope>NUCLEOTIDE SEQUENCE [LARGE SCALE GENOMIC DNA]</scope>
    <source>
        <strain>ATCC BAA-1232 / LMG 22953 / PM1</strain>
    </source>
</reference>
<keyword id="KW-0143">Chaperone</keyword>
<keyword id="KW-0963">Cytoplasm</keyword>
<keyword id="KW-0996">Nickel insertion</keyword>
<keyword id="KW-1185">Reference proteome</keyword>
<comment type="function">
    <text evidence="1">Required for maturation of urease via the functional incorporation of the urease nickel metallocenter.</text>
</comment>
<comment type="subunit">
    <text evidence="1">UreD, UreF and UreG form a complex that acts as a GTP-hydrolysis-dependent molecular chaperone, activating the urease apoprotein by helping to assemble the nickel containing metallocenter of UreC. The UreE protein probably delivers the nickel.</text>
</comment>
<comment type="subcellular location">
    <subcellularLocation>
        <location evidence="1">Cytoplasm</location>
    </subcellularLocation>
</comment>
<comment type="similarity">
    <text evidence="1">Belongs to the UreD family.</text>
</comment>
<comment type="sequence caution" evidence="2">
    <conflict type="erroneous initiation">
        <sequence resource="EMBL-CDS" id="ABM93704"/>
    </conflict>
</comment>
<evidence type="ECO:0000255" key="1">
    <source>
        <dbReference type="HAMAP-Rule" id="MF_01384"/>
    </source>
</evidence>
<evidence type="ECO:0000305" key="2"/>
<gene>
    <name evidence="1" type="primary">ureD</name>
    <name type="ordered locus">Mpe_A0742</name>
</gene>
<dbReference type="EMBL" id="CP000555">
    <property type="protein sequence ID" value="ABM93704.1"/>
    <property type="status" value="ALT_INIT"/>
    <property type="molecule type" value="Genomic_DNA"/>
</dbReference>
<dbReference type="RefSeq" id="WP_041929524.1">
    <property type="nucleotide sequence ID" value="NC_008825.1"/>
</dbReference>
<dbReference type="SMR" id="A2SDR5"/>
<dbReference type="STRING" id="420662.Mpe_A0742"/>
<dbReference type="KEGG" id="mpt:Mpe_A0742"/>
<dbReference type="eggNOG" id="COG0829">
    <property type="taxonomic scope" value="Bacteria"/>
</dbReference>
<dbReference type="HOGENOM" id="CLU_056339_0_0_4"/>
<dbReference type="Proteomes" id="UP000000366">
    <property type="component" value="Chromosome"/>
</dbReference>
<dbReference type="GO" id="GO:0005737">
    <property type="term" value="C:cytoplasm"/>
    <property type="evidence" value="ECO:0007669"/>
    <property type="project" value="UniProtKB-SubCell"/>
</dbReference>
<dbReference type="GO" id="GO:0016151">
    <property type="term" value="F:nickel cation binding"/>
    <property type="evidence" value="ECO:0007669"/>
    <property type="project" value="UniProtKB-UniRule"/>
</dbReference>
<dbReference type="HAMAP" id="MF_01384">
    <property type="entry name" value="UreD"/>
    <property type="match status" value="1"/>
</dbReference>
<dbReference type="InterPro" id="IPR002669">
    <property type="entry name" value="UreD"/>
</dbReference>
<dbReference type="PANTHER" id="PTHR33643">
    <property type="entry name" value="UREASE ACCESSORY PROTEIN D"/>
    <property type="match status" value="1"/>
</dbReference>
<dbReference type="PANTHER" id="PTHR33643:SF1">
    <property type="entry name" value="UREASE ACCESSORY PROTEIN D"/>
    <property type="match status" value="1"/>
</dbReference>
<dbReference type="Pfam" id="PF01774">
    <property type="entry name" value="UreD"/>
    <property type="match status" value="1"/>
</dbReference>
<accession>A2SDR5</accession>
<protein>
    <recommendedName>
        <fullName evidence="1">Urease accessory protein UreD</fullName>
    </recommendedName>
</protein>
<proteinExistence type="inferred from homology"/>
<name>URED_METPP</name>
<feature type="chain" id="PRO_0000340463" description="Urease accessory protein UreD">
    <location>
        <begin position="1"/>
        <end position="296"/>
    </location>
</feature>
<organism>
    <name type="scientific">Methylibium petroleiphilum (strain ATCC BAA-1232 / LMG 22953 / PM1)</name>
    <dbReference type="NCBI Taxonomy" id="420662"/>
    <lineage>
        <taxon>Bacteria</taxon>
        <taxon>Pseudomonadati</taxon>
        <taxon>Pseudomonadota</taxon>
        <taxon>Betaproteobacteria</taxon>
        <taxon>Burkholderiales</taxon>
        <taxon>Sphaerotilaceae</taxon>
        <taxon>Methylibium</taxon>
    </lineage>
</organism>